<name>RS10_SHEB2</name>
<dbReference type="EMBL" id="CP001252">
    <property type="protein sequence ID" value="ACK48530.1"/>
    <property type="molecule type" value="Genomic_DNA"/>
</dbReference>
<dbReference type="RefSeq" id="WP_006083601.1">
    <property type="nucleotide sequence ID" value="NC_011663.1"/>
</dbReference>
<dbReference type="SMR" id="B8EBK6"/>
<dbReference type="GeneID" id="67441759"/>
<dbReference type="KEGG" id="sbp:Sbal223_4057"/>
<dbReference type="HOGENOM" id="CLU_122625_1_3_6"/>
<dbReference type="Proteomes" id="UP000002507">
    <property type="component" value="Chromosome"/>
</dbReference>
<dbReference type="GO" id="GO:1990904">
    <property type="term" value="C:ribonucleoprotein complex"/>
    <property type="evidence" value="ECO:0007669"/>
    <property type="project" value="UniProtKB-KW"/>
</dbReference>
<dbReference type="GO" id="GO:0005840">
    <property type="term" value="C:ribosome"/>
    <property type="evidence" value="ECO:0007669"/>
    <property type="project" value="UniProtKB-KW"/>
</dbReference>
<dbReference type="GO" id="GO:0003735">
    <property type="term" value="F:structural constituent of ribosome"/>
    <property type="evidence" value="ECO:0007669"/>
    <property type="project" value="InterPro"/>
</dbReference>
<dbReference type="GO" id="GO:0000049">
    <property type="term" value="F:tRNA binding"/>
    <property type="evidence" value="ECO:0007669"/>
    <property type="project" value="UniProtKB-UniRule"/>
</dbReference>
<dbReference type="GO" id="GO:0006412">
    <property type="term" value="P:translation"/>
    <property type="evidence" value="ECO:0007669"/>
    <property type="project" value="UniProtKB-UniRule"/>
</dbReference>
<dbReference type="FunFam" id="3.30.70.600:FF:000001">
    <property type="entry name" value="30S ribosomal protein S10"/>
    <property type="match status" value="1"/>
</dbReference>
<dbReference type="Gene3D" id="3.30.70.600">
    <property type="entry name" value="Ribosomal protein S10 domain"/>
    <property type="match status" value="1"/>
</dbReference>
<dbReference type="HAMAP" id="MF_00508">
    <property type="entry name" value="Ribosomal_uS10"/>
    <property type="match status" value="1"/>
</dbReference>
<dbReference type="InterPro" id="IPR001848">
    <property type="entry name" value="Ribosomal_uS10"/>
</dbReference>
<dbReference type="InterPro" id="IPR018268">
    <property type="entry name" value="Ribosomal_uS10_CS"/>
</dbReference>
<dbReference type="InterPro" id="IPR027486">
    <property type="entry name" value="Ribosomal_uS10_dom"/>
</dbReference>
<dbReference type="InterPro" id="IPR036838">
    <property type="entry name" value="Ribosomal_uS10_dom_sf"/>
</dbReference>
<dbReference type="NCBIfam" id="NF001861">
    <property type="entry name" value="PRK00596.1"/>
    <property type="match status" value="1"/>
</dbReference>
<dbReference type="NCBIfam" id="TIGR01049">
    <property type="entry name" value="rpsJ_bact"/>
    <property type="match status" value="1"/>
</dbReference>
<dbReference type="PANTHER" id="PTHR11700">
    <property type="entry name" value="30S RIBOSOMAL PROTEIN S10 FAMILY MEMBER"/>
    <property type="match status" value="1"/>
</dbReference>
<dbReference type="Pfam" id="PF00338">
    <property type="entry name" value="Ribosomal_S10"/>
    <property type="match status" value="1"/>
</dbReference>
<dbReference type="PRINTS" id="PR00971">
    <property type="entry name" value="RIBOSOMALS10"/>
</dbReference>
<dbReference type="SMART" id="SM01403">
    <property type="entry name" value="Ribosomal_S10"/>
    <property type="match status" value="1"/>
</dbReference>
<dbReference type="SUPFAM" id="SSF54999">
    <property type="entry name" value="Ribosomal protein S10"/>
    <property type="match status" value="1"/>
</dbReference>
<dbReference type="PROSITE" id="PS00361">
    <property type="entry name" value="RIBOSOMAL_S10"/>
    <property type="match status" value="1"/>
</dbReference>
<accession>B8EBK6</accession>
<sequence>MQNQRIRIRLKGFDHRLIDQSTAEIVETAKRTGAQVRGPIPLPTRKERYTILISPHVNKDARDQYELRTHKRLVDIVEPTEKTVDALMRLDLAAGVDVQISLG</sequence>
<reference key="1">
    <citation type="submission" date="2008-12" db="EMBL/GenBank/DDBJ databases">
        <title>Complete sequence of chromosome of Shewanella baltica OS223.</title>
        <authorList>
            <consortium name="US DOE Joint Genome Institute"/>
            <person name="Lucas S."/>
            <person name="Copeland A."/>
            <person name="Lapidus A."/>
            <person name="Glavina del Rio T."/>
            <person name="Dalin E."/>
            <person name="Tice H."/>
            <person name="Bruce D."/>
            <person name="Goodwin L."/>
            <person name="Pitluck S."/>
            <person name="Chertkov O."/>
            <person name="Meincke L."/>
            <person name="Brettin T."/>
            <person name="Detter J.C."/>
            <person name="Han C."/>
            <person name="Kuske C.R."/>
            <person name="Larimer F."/>
            <person name="Land M."/>
            <person name="Hauser L."/>
            <person name="Kyrpides N."/>
            <person name="Ovchinnikova G."/>
            <person name="Brettar I."/>
            <person name="Rodrigues J."/>
            <person name="Konstantinidis K."/>
            <person name="Tiedje J."/>
        </authorList>
    </citation>
    <scope>NUCLEOTIDE SEQUENCE [LARGE SCALE GENOMIC DNA]</scope>
    <source>
        <strain>OS223</strain>
    </source>
</reference>
<protein>
    <recommendedName>
        <fullName evidence="1">Small ribosomal subunit protein uS10</fullName>
    </recommendedName>
    <alternativeName>
        <fullName evidence="2">30S ribosomal protein S10</fullName>
    </alternativeName>
</protein>
<feature type="chain" id="PRO_1000146075" description="Small ribosomal subunit protein uS10">
    <location>
        <begin position="1"/>
        <end position="103"/>
    </location>
</feature>
<keyword id="KW-0687">Ribonucleoprotein</keyword>
<keyword id="KW-0689">Ribosomal protein</keyword>
<comment type="function">
    <text evidence="1">Involved in the binding of tRNA to the ribosomes.</text>
</comment>
<comment type="subunit">
    <text evidence="1">Part of the 30S ribosomal subunit.</text>
</comment>
<comment type="similarity">
    <text evidence="1">Belongs to the universal ribosomal protein uS10 family.</text>
</comment>
<proteinExistence type="inferred from homology"/>
<evidence type="ECO:0000255" key="1">
    <source>
        <dbReference type="HAMAP-Rule" id="MF_00508"/>
    </source>
</evidence>
<evidence type="ECO:0000305" key="2"/>
<gene>
    <name evidence="1" type="primary">rpsJ</name>
    <name type="ordered locus">Sbal223_4057</name>
</gene>
<organism>
    <name type="scientific">Shewanella baltica (strain OS223)</name>
    <dbReference type="NCBI Taxonomy" id="407976"/>
    <lineage>
        <taxon>Bacteria</taxon>
        <taxon>Pseudomonadati</taxon>
        <taxon>Pseudomonadota</taxon>
        <taxon>Gammaproteobacteria</taxon>
        <taxon>Alteromonadales</taxon>
        <taxon>Shewanellaceae</taxon>
        <taxon>Shewanella</taxon>
    </lineage>
</organism>